<proteinExistence type="inferred from homology"/>
<reference key="1">
    <citation type="journal article" date="1996" name="FEBS Lett.">
        <title>The Tetrahymena chaperonin subunit CCT eta gene is coexpressed with CCT gamma gene during cilia biogenesis and cell sexual reproduction.</title>
        <authorList>
            <person name="Cyrne L."/>
            <person name="Guerreiro P."/>
            <person name="Cardoso A.C."/>
            <person name="Rodrigues-Pousada C."/>
            <person name="Soares H."/>
        </authorList>
    </citation>
    <scope>NUCLEOTIDE SEQUENCE [GENOMIC DNA]</scope>
    <source>
        <strain>CGL</strain>
    </source>
</reference>
<name>TCPH_TETPY</name>
<keyword id="KW-0067">ATP-binding</keyword>
<keyword id="KW-0143">Chaperone</keyword>
<keyword id="KW-0963">Cytoplasm</keyword>
<keyword id="KW-0547">Nucleotide-binding</keyword>
<sequence>MMQPTILLLKDGTDTSQGKAQIISNINAVQSIVEIVKTTLGPRGMDKLIEGNRGATISNDGATILNLLDIVHPAAKTLVDIAKAQDDEVGDGTTSVCLLAGELLKESKNFIEEGMHPQIVTKGYKEALKLALTFLQENSYSVADKSDGEKREMLLKCAQTSLNSKLLAHYKEFFSEMVVQAVETLDTNLLDKDLIGIKMVTGGSVTDSVLVKGVAFKKTFSYAGFEQQPKKFANPKICLLNIELELKAEKENAEIRIDNPDDYKSIVDAEWELIYEKLRKIVESGAQIVLSKLPIGDLATQYFADRNIFCAGRVDAEDIKRVQKATGSIVQTTVNGLSQDVLGTCGMFEEQQIGAERYNLFQDCPHSKSATIILRGGAEQFIAEAERSLNDAIMIVRRCMKANKIVPGGGAIELEISRLLRLHSRKTEGKVQLVINAFAKALEVIPKTIADNAGHDSIQVLNKLRQKHALESDQSKNFGVDINAVDGIGNNFENFVWEPIIVRKNAFSAATEAACTILSIDETVRNPKSEQPKAPPGGLRRGGPQGMAGLAKNARLGK</sequence>
<evidence type="ECO:0000256" key="1">
    <source>
        <dbReference type="SAM" id="MobiDB-lite"/>
    </source>
</evidence>
<evidence type="ECO:0000305" key="2"/>
<organism>
    <name type="scientific">Tetrahymena pyriformis</name>
    <dbReference type="NCBI Taxonomy" id="5908"/>
    <lineage>
        <taxon>Eukaryota</taxon>
        <taxon>Sar</taxon>
        <taxon>Alveolata</taxon>
        <taxon>Ciliophora</taxon>
        <taxon>Intramacronucleata</taxon>
        <taxon>Oligohymenophorea</taxon>
        <taxon>Hymenostomatida</taxon>
        <taxon>Tetrahymenina</taxon>
        <taxon>Tetrahymenidae</taxon>
        <taxon>Tetrahymena</taxon>
    </lineage>
</organism>
<dbReference type="EMBL" id="U46030">
    <property type="protein sequence ID" value="AAC47006.1"/>
    <property type="molecule type" value="Genomic_DNA"/>
</dbReference>
<dbReference type="PIR" id="S71337">
    <property type="entry name" value="S71337"/>
</dbReference>
<dbReference type="SMR" id="P54409"/>
<dbReference type="GO" id="GO:0005832">
    <property type="term" value="C:chaperonin-containing T-complex"/>
    <property type="evidence" value="ECO:0007669"/>
    <property type="project" value="UniProtKB-ARBA"/>
</dbReference>
<dbReference type="GO" id="GO:0005524">
    <property type="term" value="F:ATP binding"/>
    <property type="evidence" value="ECO:0007669"/>
    <property type="project" value="UniProtKB-KW"/>
</dbReference>
<dbReference type="GO" id="GO:0016887">
    <property type="term" value="F:ATP hydrolysis activity"/>
    <property type="evidence" value="ECO:0007669"/>
    <property type="project" value="InterPro"/>
</dbReference>
<dbReference type="GO" id="GO:0140662">
    <property type="term" value="F:ATP-dependent protein folding chaperone"/>
    <property type="evidence" value="ECO:0007669"/>
    <property type="project" value="InterPro"/>
</dbReference>
<dbReference type="GO" id="GO:0051082">
    <property type="term" value="F:unfolded protein binding"/>
    <property type="evidence" value="ECO:0007669"/>
    <property type="project" value="InterPro"/>
</dbReference>
<dbReference type="CDD" id="cd03340">
    <property type="entry name" value="TCP1_eta"/>
    <property type="match status" value="1"/>
</dbReference>
<dbReference type="FunFam" id="1.10.560.10:FF:000017">
    <property type="entry name" value="T-complex protein 1 subunit eta"/>
    <property type="match status" value="1"/>
</dbReference>
<dbReference type="FunFam" id="3.30.260.10:FF:000022">
    <property type="entry name" value="T-complex protein 1 subunit eta"/>
    <property type="match status" value="1"/>
</dbReference>
<dbReference type="FunFam" id="3.50.7.10:FF:000006">
    <property type="entry name" value="T-complex protein 1 subunit eta"/>
    <property type="match status" value="1"/>
</dbReference>
<dbReference type="Gene3D" id="3.50.7.10">
    <property type="entry name" value="GroEL"/>
    <property type="match status" value="1"/>
</dbReference>
<dbReference type="Gene3D" id="1.10.560.10">
    <property type="entry name" value="GroEL-like equatorial domain"/>
    <property type="match status" value="1"/>
</dbReference>
<dbReference type="Gene3D" id="3.30.260.10">
    <property type="entry name" value="TCP-1-like chaperonin intermediate domain"/>
    <property type="match status" value="1"/>
</dbReference>
<dbReference type="InterPro" id="IPR012720">
    <property type="entry name" value="Chap_CCT_eta"/>
</dbReference>
<dbReference type="InterPro" id="IPR017998">
    <property type="entry name" value="Chaperone_TCP-1"/>
</dbReference>
<dbReference type="InterPro" id="IPR002194">
    <property type="entry name" value="Chaperonin_TCP-1_CS"/>
</dbReference>
<dbReference type="InterPro" id="IPR002423">
    <property type="entry name" value="Cpn60/GroEL/TCP-1"/>
</dbReference>
<dbReference type="InterPro" id="IPR027409">
    <property type="entry name" value="GroEL-like_apical_dom_sf"/>
</dbReference>
<dbReference type="InterPro" id="IPR027413">
    <property type="entry name" value="GROEL-like_equatorial_sf"/>
</dbReference>
<dbReference type="InterPro" id="IPR027410">
    <property type="entry name" value="TCP-1-like_intermed_sf"/>
</dbReference>
<dbReference type="InterPro" id="IPR053374">
    <property type="entry name" value="TCP-1_chaperonin"/>
</dbReference>
<dbReference type="InterPro" id="IPR054827">
    <property type="entry name" value="thermosome_alpha"/>
</dbReference>
<dbReference type="NCBIfam" id="TIGR02345">
    <property type="entry name" value="chap_CCT_eta"/>
    <property type="match status" value="1"/>
</dbReference>
<dbReference type="NCBIfam" id="NF041082">
    <property type="entry name" value="thermosome_alpha"/>
    <property type="match status" value="1"/>
</dbReference>
<dbReference type="NCBIfam" id="NF041083">
    <property type="entry name" value="thermosome_beta"/>
    <property type="match status" value="1"/>
</dbReference>
<dbReference type="PANTHER" id="PTHR11353">
    <property type="entry name" value="CHAPERONIN"/>
    <property type="match status" value="1"/>
</dbReference>
<dbReference type="Pfam" id="PF00118">
    <property type="entry name" value="Cpn60_TCP1"/>
    <property type="match status" value="1"/>
</dbReference>
<dbReference type="PRINTS" id="PR00304">
    <property type="entry name" value="TCOMPLEXTCP1"/>
</dbReference>
<dbReference type="SUPFAM" id="SSF52029">
    <property type="entry name" value="GroEL apical domain-like"/>
    <property type="match status" value="1"/>
</dbReference>
<dbReference type="SUPFAM" id="SSF48592">
    <property type="entry name" value="GroEL equatorial domain-like"/>
    <property type="match status" value="1"/>
</dbReference>
<dbReference type="SUPFAM" id="SSF54849">
    <property type="entry name" value="GroEL-intermediate domain like"/>
    <property type="match status" value="1"/>
</dbReference>
<dbReference type="PROSITE" id="PS00750">
    <property type="entry name" value="TCP1_1"/>
    <property type="match status" value="1"/>
</dbReference>
<dbReference type="PROSITE" id="PS00751">
    <property type="entry name" value="TCP1_2"/>
    <property type="match status" value="1"/>
</dbReference>
<dbReference type="PROSITE" id="PS00995">
    <property type="entry name" value="TCP1_3"/>
    <property type="match status" value="1"/>
</dbReference>
<protein>
    <recommendedName>
        <fullName>T-complex protein 1 subunit eta</fullName>
        <shortName>TCP-1-eta</shortName>
    </recommendedName>
    <alternativeName>
        <fullName>CCT-eta</fullName>
    </alternativeName>
</protein>
<feature type="chain" id="PRO_0000128369" description="T-complex protein 1 subunit eta">
    <location>
        <begin position="1"/>
        <end position="558"/>
    </location>
</feature>
<feature type="region of interest" description="Disordered" evidence="1">
    <location>
        <begin position="524"/>
        <end position="558"/>
    </location>
</feature>
<accession>P54409</accession>
<comment type="function">
    <text>Molecular chaperone; assists the folding of proteins upon ATP hydrolysis. Known to play a role, in vitro, in the folding of actin and tubulin.</text>
</comment>
<comment type="subunit">
    <text>Heterooligomeric complex of about 850 to 900 kDa that forms two stacked rings, 12 to 16 nm in diameter.</text>
</comment>
<comment type="subcellular location">
    <subcellularLocation>
        <location>Cytoplasm</location>
    </subcellularLocation>
</comment>
<comment type="similarity">
    <text evidence="2">Belongs to the TCP-1 chaperonin family.</text>
</comment>